<dbReference type="EMBL" id="Y11392">
    <property type="protein sequence ID" value="CAA72202.1"/>
    <property type="molecule type" value="mRNA"/>
</dbReference>
<dbReference type="EMBL" id="Z93322">
    <property type="protein sequence ID" value="CAB07532.1"/>
    <property type="molecule type" value="mRNA"/>
</dbReference>
<dbReference type="EMBL" id="U84569">
    <property type="protein sequence ID" value="AAB46590.1"/>
    <property type="molecule type" value="mRNA"/>
</dbReference>
<dbReference type="EMBL" id="U84570">
    <property type="protein sequence ID" value="AAB46591.1"/>
    <property type="molecule type" value="mRNA"/>
</dbReference>
<dbReference type="EMBL" id="AP001062">
    <property type="status" value="NOT_ANNOTATED_CDS"/>
    <property type="molecule type" value="Genomic_DNA"/>
</dbReference>
<dbReference type="EMBL" id="AP001754">
    <property type="protein sequence ID" value="BAA95562.1"/>
    <property type="molecule type" value="Genomic_DNA"/>
</dbReference>
<dbReference type="EMBL" id="CH471079">
    <property type="protein sequence ID" value="EAX09432.1"/>
    <property type="molecule type" value="Genomic_DNA"/>
</dbReference>
<dbReference type="EMBL" id="CH471079">
    <property type="protein sequence ID" value="EAX09434.1"/>
    <property type="molecule type" value="Genomic_DNA"/>
</dbReference>
<dbReference type="EMBL" id="BC031300">
    <property type="protein sequence ID" value="AAH31300.1"/>
    <property type="molecule type" value="mRNA"/>
</dbReference>
<dbReference type="EMBL" id="BC072012">
    <property type="protein sequence ID" value="AAH72012.1"/>
    <property type="molecule type" value="mRNA"/>
</dbReference>
<dbReference type="CCDS" id="CCDS13709.1">
    <molecule id="O43822-1"/>
</dbReference>
<dbReference type="CCDS" id="CCDS59444.1">
    <molecule id="O43822-4"/>
</dbReference>
<dbReference type="CCDS" id="CCDS59445.1">
    <molecule id="O43822-3"/>
</dbReference>
<dbReference type="RefSeq" id="NP_001258369.1">
    <molecule id="O43822-3"/>
    <property type="nucleotide sequence ID" value="NM_001271440.2"/>
</dbReference>
<dbReference type="RefSeq" id="NP_001258370.1">
    <molecule id="O43822-4"/>
    <property type="nucleotide sequence ID" value="NM_001271441.2"/>
</dbReference>
<dbReference type="RefSeq" id="NP_001258371.1">
    <property type="nucleotide sequence ID" value="NM_001271442.1"/>
</dbReference>
<dbReference type="RefSeq" id="NP_004919.1">
    <molecule id="O43822-1"/>
    <property type="nucleotide sequence ID" value="NM_004928.3"/>
</dbReference>
<dbReference type="PDB" id="8AXR">
    <property type="method" value="X-ray"/>
    <property type="resolution" value="1.50 A"/>
    <property type="chains" value="A/B=213-245"/>
</dbReference>
<dbReference type="PDBsum" id="8AXR"/>
<dbReference type="SMR" id="O43822"/>
<dbReference type="BioGRID" id="107211">
    <property type="interactions" value="51"/>
</dbReference>
<dbReference type="CORUM" id="O43822"/>
<dbReference type="FunCoup" id="O43822">
    <property type="interactions" value="743"/>
</dbReference>
<dbReference type="IntAct" id="O43822">
    <property type="interactions" value="44"/>
</dbReference>
<dbReference type="iPTMnet" id="O43822"/>
<dbReference type="PhosphoSitePlus" id="O43822"/>
<dbReference type="BioMuta" id="C21orf2"/>
<dbReference type="jPOST" id="O43822"/>
<dbReference type="MassIVE" id="O43822"/>
<dbReference type="PeptideAtlas" id="O43822"/>
<dbReference type="ProteomicsDB" id="49187">
    <molecule id="O43822-1"/>
</dbReference>
<dbReference type="ProteomicsDB" id="49188">
    <molecule id="O43822-2"/>
</dbReference>
<dbReference type="ProteomicsDB" id="72105"/>
<dbReference type="Pumba" id="O43822"/>
<dbReference type="Antibodypedia" id="24213">
    <property type="antibodies" value="155 antibodies from 20 providers"/>
</dbReference>
<dbReference type="DNASU" id="755"/>
<dbReference type="Ensembl" id="ENST00000325223.7">
    <molecule id="O43822-3"/>
    <property type="protein sequence ID" value="ENSP00000317302.7"/>
    <property type="gene ID" value="ENSG00000160226.16"/>
</dbReference>
<dbReference type="Ensembl" id="ENST00000339818.9">
    <molecule id="O43822-1"/>
    <property type="protein sequence ID" value="ENSP00000344566.4"/>
    <property type="gene ID" value="ENSG00000160226.16"/>
</dbReference>
<dbReference type="Ensembl" id="ENST00000397956.7">
    <molecule id="O43822-4"/>
    <property type="protein sequence ID" value="ENSP00000381047.3"/>
    <property type="gene ID" value="ENSG00000160226.16"/>
</dbReference>
<dbReference type="GeneID" id="755"/>
<dbReference type="KEGG" id="hsa:755"/>
<dbReference type="MANE-Select" id="ENST00000339818.9">
    <property type="protein sequence ID" value="ENSP00000344566.4"/>
    <property type="RefSeq nucleotide sequence ID" value="NM_004928.3"/>
    <property type="RefSeq protein sequence ID" value="NP_004919.1"/>
</dbReference>
<dbReference type="UCSC" id="uc002zep.2">
    <molecule id="O43822-1"/>
    <property type="organism name" value="human"/>
</dbReference>
<dbReference type="AGR" id="HGNC:1260"/>
<dbReference type="CTD" id="755"/>
<dbReference type="DisGeNET" id="755"/>
<dbReference type="GeneCards" id="CFAP410"/>
<dbReference type="HGNC" id="HGNC:1260">
    <property type="gene designation" value="CFAP410"/>
</dbReference>
<dbReference type="HPA" id="ENSG00000160226">
    <property type="expression patterns" value="Low tissue specificity"/>
</dbReference>
<dbReference type="MalaCards" id="CFAP410"/>
<dbReference type="MIM" id="602271">
    <property type="type" value="phenotype"/>
</dbReference>
<dbReference type="MIM" id="603191">
    <property type="type" value="gene"/>
</dbReference>
<dbReference type="MIM" id="617547">
    <property type="type" value="phenotype"/>
</dbReference>
<dbReference type="neXtProt" id="NX_O43822"/>
<dbReference type="OpenTargets" id="ENSG00000160226"/>
<dbReference type="Orphanet" id="803">
    <property type="disease" value="Amyotrophic lateral sclerosis"/>
</dbReference>
<dbReference type="Orphanet" id="1872">
    <property type="disease" value="Cone rod dystrophy"/>
</dbReference>
<dbReference type="Orphanet" id="653709">
    <property type="disease" value="Cone rod dystrophy-short stature syndrome"/>
</dbReference>
<dbReference type="PharmGKB" id="PA25816"/>
<dbReference type="VEuPathDB" id="HostDB:ENSG00000160226"/>
<dbReference type="eggNOG" id="KOG2123">
    <property type="taxonomic scope" value="Eukaryota"/>
</dbReference>
<dbReference type="GeneTree" id="ENSGT00390000018807"/>
<dbReference type="HOGENOM" id="CLU_062035_2_0_1"/>
<dbReference type="InParanoid" id="O43822"/>
<dbReference type="OMA" id="ISICHEL"/>
<dbReference type="OrthoDB" id="1517790at2759"/>
<dbReference type="PAN-GO" id="O43822">
    <property type="GO annotations" value="1 GO annotation based on evolutionary models"/>
</dbReference>
<dbReference type="PhylomeDB" id="O43822"/>
<dbReference type="TreeFam" id="TF326666"/>
<dbReference type="PathwayCommons" id="O43822"/>
<dbReference type="SignaLink" id="O43822"/>
<dbReference type="BioGRID-ORCS" id="755">
    <property type="hits" value="82 hits in 1148 CRISPR screens"/>
</dbReference>
<dbReference type="ChiTaRS" id="C21orf2">
    <property type="organism name" value="human"/>
</dbReference>
<dbReference type="GenomeRNAi" id="755"/>
<dbReference type="Pharos" id="O43822">
    <property type="development level" value="Tbio"/>
</dbReference>
<dbReference type="PRO" id="PR:O43822"/>
<dbReference type="Proteomes" id="UP000005640">
    <property type="component" value="Chromosome 21"/>
</dbReference>
<dbReference type="RNAct" id="O43822">
    <property type="molecule type" value="protein"/>
</dbReference>
<dbReference type="Bgee" id="ENSG00000160226">
    <property type="expression patterns" value="Expressed in right uterine tube and 122 other cell types or tissues"/>
</dbReference>
<dbReference type="GO" id="GO:0036064">
    <property type="term" value="C:ciliary basal body"/>
    <property type="evidence" value="ECO:0000314"/>
    <property type="project" value="HPA"/>
</dbReference>
<dbReference type="GO" id="GO:0005737">
    <property type="term" value="C:cytoplasm"/>
    <property type="evidence" value="ECO:0000314"/>
    <property type="project" value="UniProtKB"/>
</dbReference>
<dbReference type="GO" id="GO:0005829">
    <property type="term" value="C:cytosol"/>
    <property type="evidence" value="ECO:0000314"/>
    <property type="project" value="HPA"/>
</dbReference>
<dbReference type="GO" id="GO:0005794">
    <property type="term" value="C:Golgi apparatus"/>
    <property type="evidence" value="ECO:0000314"/>
    <property type="project" value="HPA"/>
</dbReference>
<dbReference type="GO" id="GO:0005739">
    <property type="term" value="C:mitochondrion"/>
    <property type="evidence" value="ECO:0000314"/>
    <property type="project" value="UniProtKB"/>
</dbReference>
<dbReference type="GO" id="GO:0005654">
    <property type="term" value="C:nucleoplasm"/>
    <property type="evidence" value="ECO:0000314"/>
    <property type="project" value="HPA"/>
</dbReference>
<dbReference type="GO" id="GO:0032391">
    <property type="term" value="C:photoreceptor connecting cilium"/>
    <property type="evidence" value="ECO:0000250"/>
    <property type="project" value="UniProtKB"/>
</dbReference>
<dbReference type="GO" id="GO:0001750">
    <property type="term" value="C:photoreceptor outer segment"/>
    <property type="evidence" value="ECO:0000314"/>
    <property type="project" value="UniProtKB"/>
</dbReference>
<dbReference type="GO" id="GO:0005886">
    <property type="term" value="C:plasma membrane"/>
    <property type="evidence" value="ECO:0000314"/>
    <property type="project" value="UniProtKB"/>
</dbReference>
<dbReference type="GO" id="GO:0060271">
    <property type="term" value="P:cilium assembly"/>
    <property type="evidence" value="ECO:0007669"/>
    <property type="project" value="Ensembl"/>
</dbReference>
<dbReference type="GO" id="GO:0007010">
    <property type="term" value="P:cytoskeleton organization"/>
    <property type="evidence" value="ECO:0000315"/>
    <property type="project" value="UniProtKB"/>
</dbReference>
<dbReference type="GO" id="GO:0006974">
    <property type="term" value="P:DNA damage response"/>
    <property type="evidence" value="ECO:0007669"/>
    <property type="project" value="UniProtKB-KW"/>
</dbReference>
<dbReference type="GO" id="GO:0008360">
    <property type="term" value="P:regulation of cell shape"/>
    <property type="evidence" value="ECO:0000315"/>
    <property type="project" value="UniProtKB"/>
</dbReference>
<dbReference type="GO" id="GO:0007224">
    <property type="term" value="P:smoothened signaling pathway"/>
    <property type="evidence" value="ECO:0007669"/>
    <property type="project" value="Ensembl"/>
</dbReference>
<dbReference type="FunFam" id="3.80.10.10:FF:000094">
    <property type="entry name" value="protein C21orf2 isoform X1"/>
    <property type="match status" value="1"/>
</dbReference>
<dbReference type="Gene3D" id="3.80.10.10">
    <property type="entry name" value="Ribonuclease Inhibitor"/>
    <property type="match status" value="1"/>
</dbReference>
<dbReference type="InterPro" id="IPR001611">
    <property type="entry name" value="Leu-rich_rpt"/>
</dbReference>
<dbReference type="InterPro" id="IPR032675">
    <property type="entry name" value="LRR_dom_sf"/>
</dbReference>
<dbReference type="InterPro" id="IPR003603">
    <property type="entry name" value="U2A'_phosphoprotein32A_C"/>
</dbReference>
<dbReference type="PANTHER" id="PTHR18849:SF0">
    <property type="entry name" value="CILIA- AND FLAGELLA-ASSOCIATED PROTEIN 410-RELATED"/>
    <property type="match status" value="1"/>
</dbReference>
<dbReference type="PANTHER" id="PTHR18849">
    <property type="entry name" value="LEUCINE RICH REPEAT PROTEIN"/>
    <property type="match status" value="1"/>
</dbReference>
<dbReference type="SMART" id="SM00446">
    <property type="entry name" value="LRRcap"/>
    <property type="match status" value="1"/>
</dbReference>
<dbReference type="SUPFAM" id="SSF52058">
    <property type="entry name" value="L domain-like"/>
    <property type="match status" value="1"/>
</dbReference>
<dbReference type="PROSITE" id="PS51450">
    <property type="entry name" value="LRR"/>
    <property type="match status" value="2"/>
</dbReference>
<keyword id="KW-0002">3D-structure</keyword>
<keyword id="KW-0025">Alternative splicing</keyword>
<keyword id="KW-0966">Cell projection</keyword>
<keyword id="KW-1186">Ciliopathy</keyword>
<keyword id="KW-0970">Cilium biogenesis/degradation</keyword>
<keyword id="KW-0963">Cytoplasm</keyword>
<keyword id="KW-0206">Cytoskeleton</keyword>
<keyword id="KW-0225">Disease variant</keyword>
<keyword id="KW-0227">DNA damage</keyword>
<keyword id="KW-0242">Dwarfism</keyword>
<keyword id="KW-0433">Leucine-rich repeat</keyword>
<keyword id="KW-0496">Mitochondrion</keyword>
<keyword id="KW-0597">Phosphoprotein</keyword>
<keyword id="KW-1267">Proteomics identification</keyword>
<keyword id="KW-1185">Reference proteome</keyword>
<keyword id="KW-0677">Repeat</keyword>
<protein>
    <recommendedName>
        <fullName evidence="15">Cilia- and flagella-associated protein 410</fullName>
    </recommendedName>
    <alternativeName>
        <fullName>C21orf-HUMF09G8.5</fullName>
    </alternativeName>
    <alternativeName>
        <fullName>Leucine-rich repeat-containing protein 76</fullName>
    </alternativeName>
    <alternativeName>
        <fullName>YF5/A2</fullName>
    </alternativeName>
</protein>
<reference key="1">
    <citation type="journal article" date="1998" name="Genomics">
        <title>Characterization of a novel gene, C21orf2, on human chromosome 21q22.3 and its exclusion as the APECED gene by mutation analysis.</title>
        <authorList>
            <person name="Scott H.S."/>
            <person name="Kyriakou D.S."/>
            <person name="Peterson P."/>
            <person name="Heino M."/>
            <person name="Tahtinen M."/>
            <person name="Krohn K."/>
            <person name="Chen H."/>
            <person name="Rossier C."/>
            <person name="Lalioti M.D."/>
            <person name="Antonarakis S.E."/>
        </authorList>
    </citation>
    <scope>NUCLEOTIDE SEQUENCE [MRNA]</scope>
    <source>
        <tissue>Lung</tissue>
        <tissue>Pancreas</tissue>
    </source>
</reference>
<reference key="2">
    <citation type="submission" date="1997-09" db="EMBL/GenBank/DDBJ databases">
        <title>Isolation of candidate genes mapping in the APECED disease (PGD type I) region on Human chromosome 21q22.3.</title>
        <authorList>
            <person name="Thiel C."/>
            <person name="Lehrach H."/>
            <person name="Yaspo M.-L."/>
        </authorList>
    </citation>
    <scope>NUCLEOTIDE SEQUENCE [MRNA]</scope>
    <scope>VARIANT ILE-150</scope>
    <source>
        <tissue>Lung</tissue>
    </source>
</reference>
<reference key="3">
    <citation type="submission" date="1997-02" db="EMBL/GenBank/DDBJ databases">
        <title>Characterization of alternatively spliced human YF5 and A2 cDNAs.</title>
        <authorList>
            <person name="Pruijn G.J.M."/>
            <person name="Misaki Y."/>
            <person name="van Venrooij W.J."/>
        </authorList>
    </citation>
    <scope>NUCLEOTIDE SEQUENCE [MRNA] (ISOFORMS 3 AND SHORT)</scope>
    <source>
        <tissue>Placenta</tissue>
        <tissue>Teratocarcinoma</tissue>
    </source>
</reference>
<reference key="4">
    <citation type="journal article" date="2000" name="Nature">
        <title>The DNA sequence of human chromosome 21.</title>
        <authorList>
            <person name="Hattori M."/>
            <person name="Fujiyama A."/>
            <person name="Taylor T.D."/>
            <person name="Watanabe H."/>
            <person name="Yada T."/>
            <person name="Park H.-S."/>
            <person name="Toyoda A."/>
            <person name="Ishii K."/>
            <person name="Totoki Y."/>
            <person name="Choi D.-K."/>
            <person name="Groner Y."/>
            <person name="Soeda E."/>
            <person name="Ohki M."/>
            <person name="Takagi T."/>
            <person name="Sakaki Y."/>
            <person name="Taudien S."/>
            <person name="Blechschmidt K."/>
            <person name="Polley A."/>
            <person name="Menzel U."/>
            <person name="Delabar J."/>
            <person name="Kumpf K."/>
            <person name="Lehmann R."/>
            <person name="Patterson D."/>
            <person name="Reichwald K."/>
            <person name="Rump A."/>
            <person name="Schillhabel M."/>
            <person name="Schudy A."/>
            <person name="Zimmermann W."/>
            <person name="Rosenthal A."/>
            <person name="Kudoh J."/>
            <person name="Shibuya K."/>
            <person name="Kawasaki K."/>
            <person name="Asakawa S."/>
            <person name="Shintani A."/>
            <person name="Sasaki T."/>
            <person name="Nagamine K."/>
            <person name="Mitsuyama S."/>
            <person name="Antonarakis S.E."/>
            <person name="Minoshima S."/>
            <person name="Shimizu N."/>
            <person name="Nordsiek G."/>
            <person name="Hornischer K."/>
            <person name="Brandt P."/>
            <person name="Scharfe M."/>
            <person name="Schoen O."/>
            <person name="Desario A."/>
            <person name="Reichelt J."/>
            <person name="Kauer G."/>
            <person name="Bloecker H."/>
            <person name="Ramser J."/>
            <person name="Beck A."/>
            <person name="Klages S."/>
            <person name="Hennig S."/>
            <person name="Riesselmann L."/>
            <person name="Dagand E."/>
            <person name="Wehrmeyer S."/>
            <person name="Borzym K."/>
            <person name="Gardiner K."/>
            <person name="Nizetic D."/>
            <person name="Francis F."/>
            <person name="Lehrach H."/>
            <person name="Reinhardt R."/>
            <person name="Yaspo M.-L."/>
        </authorList>
    </citation>
    <scope>NUCLEOTIDE SEQUENCE [LARGE SCALE GENOMIC DNA]</scope>
</reference>
<reference key="5">
    <citation type="submission" date="2005-09" db="EMBL/GenBank/DDBJ databases">
        <authorList>
            <person name="Mural R.J."/>
            <person name="Istrail S."/>
            <person name="Sutton G.G."/>
            <person name="Florea L."/>
            <person name="Halpern A.L."/>
            <person name="Mobarry C.M."/>
            <person name="Lippert R."/>
            <person name="Walenz B."/>
            <person name="Shatkay H."/>
            <person name="Dew I."/>
            <person name="Miller J.R."/>
            <person name="Flanigan M.J."/>
            <person name="Edwards N.J."/>
            <person name="Bolanos R."/>
            <person name="Fasulo D."/>
            <person name="Halldorsson B.V."/>
            <person name="Hannenhalli S."/>
            <person name="Turner R."/>
            <person name="Yooseph S."/>
            <person name="Lu F."/>
            <person name="Nusskern D.R."/>
            <person name="Shue B.C."/>
            <person name="Zheng X.H."/>
            <person name="Zhong F."/>
            <person name="Delcher A.L."/>
            <person name="Huson D.H."/>
            <person name="Kravitz S.A."/>
            <person name="Mouchard L."/>
            <person name="Reinert K."/>
            <person name="Remington K.A."/>
            <person name="Clark A.G."/>
            <person name="Waterman M.S."/>
            <person name="Eichler E.E."/>
            <person name="Adams M.D."/>
            <person name="Hunkapiller M.W."/>
            <person name="Myers E.W."/>
            <person name="Venter J.C."/>
        </authorList>
    </citation>
    <scope>NUCLEOTIDE SEQUENCE [LARGE SCALE GENOMIC DNA]</scope>
</reference>
<reference key="6">
    <citation type="journal article" date="2004" name="Genome Res.">
        <title>The status, quality, and expansion of the NIH full-length cDNA project: the Mammalian Gene Collection (MGC).</title>
        <authorList>
            <consortium name="The MGC Project Team"/>
        </authorList>
    </citation>
    <scope>NUCLEOTIDE SEQUENCE [LARGE SCALE MRNA] (ISOFORMS LONG AND 4)</scope>
    <source>
        <tissue>Colon</tissue>
        <tissue>Ovary</tissue>
    </source>
</reference>
<reference key="7">
    <citation type="journal article" date="1997" name="Biochem. Biophys. Res. Commun.">
        <title>Immunochemical characterization of a novel mitochondrially located protein encoded by a nuclear gene within the DFNB8/10 critical region on 21q22.3.</title>
        <authorList>
            <person name="Krohn K."/>
            <person name="Ovod V."/>
            <person name="Vilja P."/>
            <person name="Heino M."/>
            <person name="Scott H."/>
            <person name="Kyriakou D.S."/>
            <person name="Antonarakis S."/>
            <person name="Jacobs H.T."/>
            <person name="Isola J."/>
            <person name="Peterson P."/>
        </authorList>
    </citation>
    <scope>SUBCELLULAR LOCATION</scope>
    <scope>TISSUE SPECIFICITY</scope>
</reference>
<reference key="8">
    <citation type="journal article" date="2009" name="Mol. Cell. Proteomics">
        <title>Large-scale proteomics analysis of the human kinome.</title>
        <authorList>
            <person name="Oppermann F.S."/>
            <person name="Gnad F."/>
            <person name="Olsen J.V."/>
            <person name="Hornberger R."/>
            <person name="Greff Z."/>
            <person name="Keri G."/>
            <person name="Mann M."/>
            <person name="Daub H."/>
        </authorList>
    </citation>
    <scope>PHOSPHORYLATION [LARGE SCALE ANALYSIS] AT SER-136 AND SER-177</scope>
    <scope>PHOSPHORYLATION [LARGE SCALE ANALYSIS] AT SER-177 (ISOFORMS 3 AND 4)</scope>
    <scope>IDENTIFICATION BY MASS SPECTROMETRY [LARGE SCALE ANALYSIS]</scope>
</reference>
<reference key="9">
    <citation type="journal article" date="2011" name="BMC Biol.">
        <title>Identification and characterization of a set of conserved and new regulators of cytoskeletal organisation, cell morphology and migration.</title>
        <authorList>
            <person name="Bai S.W."/>
            <person name="Herrera-Abreu M.T."/>
            <person name="Rohn J.L."/>
            <person name="Racine V."/>
            <person name="Tajadura V."/>
            <person name="Suryavanshi N."/>
            <person name="Bechtel S."/>
            <person name="Wiemann S."/>
            <person name="Baum B."/>
            <person name="Ridley A.J."/>
        </authorList>
    </citation>
    <scope>FUNCTION</scope>
</reference>
<reference key="10">
    <citation type="journal article" date="2013" name="J. Proteome Res.">
        <title>Toward a comprehensive characterization of a human cancer cell phosphoproteome.</title>
        <authorList>
            <person name="Zhou H."/>
            <person name="Di Palma S."/>
            <person name="Preisinger C."/>
            <person name="Peng M."/>
            <person name="Polat A.N."/>
            <person name="Heck A.J."/>
            <person name="Mohammed S."/>
        </authorList>
    </citation>
    <scope>PHOSPHORYLATION [LARGE SCALE ANALYSIS] AT SER-136</scope>
    <scope>IDENTIFICATION BY MASS SPECTROMETRY [LARGE SCALE ANALYSIS]</scope>
    <source>
        <tissue>Cervix carcinoma</tissue>
        <tissue>Erythroleukemia</tissue>
    </source>
</reference>
<reference key="11">
    <citation type="journal article" date="2015" name="Acta Biochim. Biophys. Sin.">
        <title>The NEK1 interactor, C21ORF2, is required for efficient DNA damage repair.</title>
        <authorList>
            <person name="Fang X."/>
            <person name="Lin H."/>
            <person name="Wang X."/>
            <person name="Zuo Q."/>
            <person name="Qin J."/>
            <person name="Zhang P."/>
        </authorList>
    </citation>
    <scope>FUNCTION</scope>
    <scope>INTERACTION WITH NEK1</scope>
    <scope>SUBCELLULAR LOCATION</scope>
</reference>
<reference key="12">
    <citation type="journal article" date="2015" name="Br. J. Ophthalmol.">
        <title>C21orf2 is mutated in recessive early-onset retinal dystrophy with macular staphyloma and encodes a protein that localises to the photoreceptor primary cilium.</title>
        <authorList>
            <person name="Khan A.O."/>
            <person name="Eisenberger T."/>
            <person name="Nagel-Wolfrum K."/>
            <person name="Wolfrum U."/>
            <person name="Bolz H.J."/>
        </authorList>
    </citation>
    <scope>TISSUE SPECIFICITY</scope>
    <scope>SUBCELLULAR LOCATION</scope>
    <scope>INVOLVEMENT IN RDMS</scope>
    <scope>VARIANT RDMS TYR-61</scope>
</reference>
<reference key="13">
    <citation type="journal article" date="2015" name="Nat. Cell Biol.">
        <title>An siRNA-based functional genomics screen for the identification of regulators of ciliogenesis and ciliopathy genes.</title>
        <authorList>
            <consortium name="UK10K Consortium"/>
            <consortium name="University of Washington Center for Mendelian Genomics"/>
            <person name="Wheway G."/>
            <person name="Schmidts M."/>
            <person name="Mans D.A."/>
            <person name="Szymanska K."/>
            <person name="Nguyen T.M."/>
            <person name="Racher H."/>
            <person name="Phelps I.G."/>
            <person name="Toedt G."/>
            <person name="Kennedy J."/>
            <person name="Wunderlich K.A."/>
            <person name="Sorusch N."/>
            <person name="Abdelhamed Z.A."/>
            <person name="Natarajan S."/>
            <person name="Herridge W."/>
            <person name="van Reeuwijk J."/>
            <person name="Horn N."/>
            <person name="Boldt K."/>
            <person name="Parry D.A."/>
            <person name="Letteboer S.J."/>
            <person name="Roosing S."/>
            <person name="Adams M."/>
            <person name="Bell S.M."/>
            <person name="Bond J."/>
            <person name="Higgins J."/>
            <person name="Morrison E.E."/>
            <person name="Tomlinson D.C."/>
            <person name="Slaats G.G."/>
            <person name="van Dam T.J."/>
            <person name="Huang L."/>
            <person name="Kessler K."/>
            <person name="Giessl A."/>
            <person name="Logan C.V."/>
            <person name="Boyle E.A."/>
            <person name="Shendure J."/>
            <person name="Anazi S."/>
            <person name="Aldahmesh M."/>
            <person name="Al Hazzaa S."/>
            <person name="Hegele R.A."/>
            <person name="Ober C."/>
            <person name="Frosk P."/>
            <person name="Mhanni A.A."/>
            <person name="Chodirker B.N."/>
            <person name="Chudley A.E."/>
            <person name="Lamont R."/>
            <person name="Bernier F.P."/>
            <person name="Beaulieu C.L."/>
            <person name="Gordon P."/>
            <person name="Pon R.T."/>
            <person name="Donahue C."/>
            <person name="Barkovich A.J."/>
            <person name="Wolf L."/>
            <person name="Toomes C."/>
            <person name="Thiel C.T."/>
            <person name="Boycott K.M."/>
            <person name="McKibbin M."/>
            <person name="Inglehearn C.F."/>
            <person name="Stewart F."/>
            <person name="Omran H."/>
            <person name="Huynen M.A."/>
            <person name="Sergouniotis P.I."/>
            <person name="Alkuraya F.S."/>
            <person name="Parboosingh J.S."/>
            <person name="Innes A.M."/>
            <person name="Willoughby C.E."/>
            <person name="Giles R.H."/>
            <person name="Webster A.R."/>
            <person name="Ueffing M."/>
            <person name="Blacque O."/>
            <person name="Gleeson J.G."/>
            <person name="Wolfrum U."/>
            <person name="Beales P.L."/>
            <person name="Gibson T."/>
            <person name="Doherty D."/>
            <person name="Mitchison H.M."/>
            <person name="Roepman R."/>
            <person name="Johnson C.A."/>
        </authorList>
    </citation>
    <scope>SUBCELLULAR LOCATION</scope>
    <scope>INVOLVEMENT IN SMDAX</scope>
    <scope>VARIANTS SMDAX PRO-73 AND PRO-224</scope>
    <scope>CHARACTERIZATION OF VARIANTS SMDAX PRO-73 AND PRO-224</scope>
    <scope>IDENTIFICATION BY MASS SPECTROMETRY</scope>
    <scope>IDENTIFICATION IN A COMPLEX WITH NECK1 AND SPATA7</scope>
    <scope>INTERACTION WITH NECK1</scope>
</reference>
<reference key="14">
    <citation type="journal article" date="2016" name="Invest. Ophthalmol. Vis. Sci.">
        <title>Identification of novel mutations in the LRR-Cap domain of C21orf2 in Japanese patients with retinitis pigmentosa and Cone-Rod Dystrophy.</title>
        <authorList>
            <person name="Suga A."/>
            <person name="Mizota A."/>
            <person name="Kato M."/>
            <person name="Kuniyoshi K."/>
            <person name="Yoshitake K."/>
            <person name="Sultan W."/>
            <person name="Yamazaki M."/>
            <person name="Shimomura Y."/>
            <person name="Ikeo K."/>
            <person name="Tsunoda K."/>
            <person name="Iwata T."/>
        </authorList>
    </citation>
    <scope>SUBCELLULAR LOCATION</scope>
    <scope>VARIANTS SMDAX HIS-107 AND MET-111</scope>
    <scope>VARIANT RDMS CYS-107</scope>
    <scope>CHARACTERIZATION OF VARIANTS SMDAX HIS-107 AND MET-111</scope>
</reference>
<reference key="15">
    <citation type="journal article" date="2016" name="PLoS ONE">
        <title>Axial spondylometaphyseal dysplasia is caused by C21orf2 mutations.</title>
        <authorList>
            <person name="Wang Z."/>
            <person name="Iida A."/>
            <person name="Miyake N."/>
            <person name="Nishiguchi K.M."/>
            <person name="Fujita K."/>
            <person name="Nakazawa T."/>
            <person name="Alswaid A."/>
            <person name="Albalwi M.A."/>
            <person name="Kim O.H."/>
            <person name="Cho T.J."/>
            <person name="Lim G.Y."/>
            <person name="Isidor B."/>
            <person name="David A."/>
            <person name="Rustad C.F."/>
            <person name="Merckoll E."/>
            <person name="Westvik J."/>
            <person name="Stattin E.L."/>
            <person name="Grigelioniene G."/>
            <person name="Kou I."/>
            <person name="Nakajima M."/>
            <person name="Ohashi H."/>
            <person name="Smithson S."/>
            <person name="Matsumoto N."/>
            <person name="Nishimura G."/>
            <person name="Ikegawa S."/>
        </authorList>
    </citation>
    <scope>TISSUE SPECIFICITY</scope>
    <scope>INVOLVEMENT IN SMDAX</scope>
    <scope>VARIANTS SMDAX PRO-73; HIS-107 AND LEU-116</scope>
</reference>
<reference key="16">
    <citation type="journal article" date="2017" name="Am. J. Med. Genet. A">
        <title>Homozygous variant in C21orf2 in a case of Jeune syndrome with severe thoracic involvement: Extending the phenotypic spectrum.</title>
        <authorList>
            <person name="McInerney-Leo A.M."/>
            <person name="Wheeler L."/>
            <person name="Marshall M.S."/>
            <person name="Anderson L.K."/>
            <person name="Zankl A."/>
            <person name="Brown M.A."/>
            <person name="Leo P.J."/>
            <person name="Wicking C."/>
            <person name="Duncan E.L."/>
        </authorList>
    </citation>
    <scope>VARIANT SMDAX PRO-73</scope>
</reference>
<comment type="function">
    <text evidence="1 3 5">Plays a role in cilia formation and/or maintenance (By similarity). Plays a role in the regulation of cell morphology and cytoskeletal organization (PubMed:21834987). Involved in DNA damage repair (PubMed:26290490).</text>
</comment>
<comment type="subunit">
    <text evidence="4 5">Found in a complex with CFAP410, NEK1 and SPATA7 (PubMed:26167768). Interacts with NEK1 (PubMed:26167768, PubMed:26290490).</text>
</comment>
<comment type="interaction">
    <interactant intactId="EBI-2835332">
        <id>O43822</id>
    </interactant>
    <interactant intactId="EBI-10179267">
        <id>O00244</id>
        <label>ATOX1</label>
    </interactant>
    <organismsDiffer>false</organismsDiffer>
    <experiments>3</experiments>
</comment>
<comment type="interaction">
    <interactant intactId="EBI-2835332">
        <id>O43822</id>
    </interactant>
    <interactant intactId="EBI-10172181">
        <id>Q53SE7</id>
        <label>FLJ13057</label>
    </interactant>
    <organismsDiffer>false</organismsDiffer>
    <experiments>3</experiments>
</comment>
<comment type="interaction">
    <interactant intactId="EBI-11943144">
        <id>O43822-4</id>
    </interactant>
    <interactant intactId="EBI-2548508">
        <id>Q96IK5</id>
        <label>GMCL1</label>
    </interactant>
    <organismsDiffer>false</organismsDiffer>
    <experiments>3</experiments>
</comment>
<comment type="interaction">
    <interactant intactId="EBI-11943144">
        <id>O43822-4</id>
    </interactant>
    <interactant intactId="EBI-742688">
        <id>Q9NZD8</id>
        <label>SPG21</label>
    </interactant>
    <organismsDiffer>false</organismsDiffer>
    <experiments>3</experiments>
</comment>
<comment type="subcellular location">
    <subcellularLocation>
        <location evidence="10">Mitochondrion</location>
    </subcellularLocation>
    <subcellularLocation>
        <location evidence="4 6">Cytoplasm</location>
        <location evidence="4 6">Cytoskeleton</location>
        <location evidence="4 6">Cilium basal body</location>
    </subcellularLocation>
    <subcellularLocation>
        <location evidence="8">Cell projection</location>
        <location evidence="8">Cilium</location>
        <location evidence="8">Photoreceptor outer segment</location>
    </subcellularLocation>
    <subcellularLocation>
        <location evidence="5">Cytoplasm</location>
    </subcellularLocation>
    <text evidence="4">Colocalizes with NEK1 and SPATA7 at the basal body.</text>
</comment>
<comment type="alternative products">
    <event type="alternative splicing"/>
    <isoform>
        <id>O43822-1</id>
        <name>Long</name>
        <sequence type="displayed"/>
    </isoform>
    <isoform>
        <id>O43822-2</id>
        <name>Short</name>
        <sequence type="described" ref="VSP_004138 VSP_004139"/>
    </isoform>
    <isoform>
        <id>O43822-3</id>
        <name>3</name>
        <sequence type="described" ref="VSP_047417"/>
    </isoform>
    <isoform>
        <id>O43822-4</id>
        <name>4</name>
        <sequence type="described" ref="VSP_047417 VSP_047418"/>
    </isoform>
</comment>
<comment type="tissue specificity">
    <text>Widely expressed (PubMed:26974433, PubMed:9325172). Expressed in the retina (PubMed:26294103).</text>
</comment>
<comment type="disease" evidence="6 8">
    <disease id="DI-05024">
        <name>Retinal dystrophy with or without macular staphyloma</name>
        <acronym>RDMS</acronym>
        <description>An ocular disorder characterized by decreased vision which worsen over time, and dystrophic changes in the retina, such as retinal pigment epithelium mottling and vessel narrowing. Macular staphyloma, without high myopia, is present in some patients.</description>
        <dbReference type="MIM" id="617547"/>
    </disease>
    <text>The disease is caused by variants affecting the gene represented in this entry.</text>
</comment>
<comment type="disease" evidence="4 7 8 9">
    <disease id="DI-05025">
        <name>Spondylometaphyseal dysplasia, axial</name>
        <acronym>SMDAX</acronym>
        <description>A form of spondylometaphyseal dysplasia, a group of short stature disorders distinguished by abnormalities in the vertebrae and the metaphyses of the tubular bones. SMDAX is characterized by metaphyseal changes of truncal-juxtatruncal bones, including the proximal femora. Main clinical features are postnatal growth failure, rhizomelic short stature in early childhood evolving into short trunk in late childhood, and thoracic hypoplasia that may cause mild to moderate respiratory problems in the neonatal period and later susceptibility to airway infection. Impaired visual acuity comes to medical attention in early life and function rapidly deteriorates. Retinal changes are diagnosed as retinitis pigmentosa or pigmentary retinal degeneration on fundoscopic examination and cone-rod dystrophy on electroretinogram. The radiological hallmarks include short ribs with flared, cupped anterior ends, mild spondylar dysplasia, lacy iliac crests, and metaphyseal irregularities essentially confined to the proximal femora.</description>
        <dbReference type="MIM" id="602271"/>
    </disease>
    <text>The disease is caused by variants affecting the gene represented in this entry.</text>
</comment>
<organism>
    <name type="scientific">Homo sapiens</name>
    <name type="common">Human</name>
    <dbReference type="NCBI Taxonomy" id="9606"/>
    <lineage>
        <taxon>Eukaryota</taxon>
        <taxon>Metazoa</taxon>
        <taxon>Chordata</taxon>
        <taxon>Craniata</taxon>
        <taxon>Vertebrata</taxon>
        <taxon>Euteleostomi</taxon>
        <taxon>Mammalia</taxon>
        <taxon>Eutheria</taxon>
        <taxon>Euarchontoglires</taxon>
        <taxon>Primates</taxon>
        <taxon>Haplorrhini</taxon>
        <taxon>Catarrhini</taxon>
        <taxon>Hominidae</taxon>
        <taxon>Homo</taxon>
    </lineage>
</organism>
<name>CF410_HUMAN</name>
<accession>O43822</accession>
<accession>A8MPS9</accession>
<accession>O14993</accession>
<accession>Q8N5X6</accession>
<accession>Q99837</accession>
<accession>Q99838</accession>
<feature type="chain" id="PRO_0000079503" description="Cilia- and flagella-associated protein 410">
    <location>
        <begin position="1"/>
        <end position="256"/>
    </location>
</feature>
<feature type="repeat" description="LRR 1">
    <location>
        <begin position="19"/>
        <end position="40"/>
    </location>
</feature>
<feature type="repeat" description="LRR 2">
    <location>
        <begin position="41"/>
        <end position="62"/>
    </location>
</feature>
<feature type="repeat" description="LRR 3">
    <location>
        <begin position="63"/>
        <end position="84"/>
    </location>
</feature>
<feature type="domain" description="LRRCT">
    <location>
        <begin position="97"/>
        <end position="137"/>
    </location>
</feature>
<feature type="region of interest" description="Disordered" evidence="2">
    <location>
        <begin position="129"/>
        <end position="156"/>
    </location>
</feature>
<feature type="region of interest" description="Disordered" evidence="2">
    <location>
        <begin position="168"/>
        <end position="212"/>
    </location>
</feature>
<feature type="modified residue" description="Phosphoserine" evidence="16 17">
    <location>
        <position position="136"/>
    </location>
</feature>
<feature type="modified residue" description="Phosphoserine" evidence="16">
    <location>
        <position position="177"/>
    </location>
</feature>
<feature type="splice variant" id="VSP_004138" description="In isoform Short." evidence="13">
    <location>
        <begin position="1"/>
        <end position="38"/>
    </location>
</feature>
<feature type="splice variant" id="VSP_004139" description="In isoform Short." evidence="13">
    <location>
        <begin position="49"/>
        <end position="51"/>
    </location>
</feature>
<feature type="splice variant" id="VSP_047417" description="In isoform 3 and isoform 4." evidence="12 13">
    <location>
        <position position="183"/>
    </location>
</feature>
<feature type="splice variant" id="VSP_047418" description="In isoform 4." evidence="12">
    <original>R</original>
    <variation>RVSGGPLGAAAASAHCTHCTETVGREHGASQGPVGREHGASQGLEELCPRGSCVCGSVNAHTRVTRAPHGAVLAPQPLLLSWSVECGPGPCWAEGNRSHVEEVPHTRPQAGLLCSDSPSVP</variation>
    <location>
        <position position="214"/>
    </location>
</feature>
<feature type="sequence variant" id="VAR_079180" description="In RDMS; dbSNP:rs1057518441." evidence="6">
    <original>C</original>
    <variation>Y</variation>
    <location>
        <position position="61"/>
    </location>
</feature>
<feature type="sequence variant" id="VAR_075924" description="In SMDAX; patients may exhibit clinical features overlapping with Jeune syndrome; decreased function in ciliogenesis; abolishes interaction with NEK1; dbSNP:rs140451304." evidence="4 7 9">
    <original>R</original>
    <variation>P</variation>
    <location>
        <position position="73"/>
    </location>
</feature>
<feature type="sequence variant" id="VAR_079181" description="In RDMS; dbSNP:rs1131690801." evidence="8">
    <original>Y</original>
    <variation>C</variation>
    <location>
        <position position="107"/>
    </location>
</feature>
<feature type="sequence variant" id="VAR_075925" description="In SMDAX; increases protein degradation; changes protein localization; dbSNP:rs763623409." evidence="7 8">
    <original>Y</original>
    <variation>H</variation>
    <location>
        <position position="107"/>
    </location>
</feature>
<feature type="sequence variant" id="VAR_079182" description="In SMDAX; increases protein degradation; changes protein localization; dbSNP:rs555164150." evidence="8">
    <original>V</original>
    <variation>M</variation>
    <location>
        <position position="111"/>
    </location>
</feature>
<feature type="sequence variant" id="VAR_075926" description="In SMDAX; dbSNP:rs922930539." evidence="7">
    <original>P</original>
    <variation>L</variation>
    <location>
        <position position="116"/>
    </location>
</feature>
<feature type="sequence variant" id="VAR_016155" description="In dbSNP:rs2277809." evidence="11">
    <original>T</original>
    <variation>I</variation>
    <location>
        <position position="150"/>
    </location>
</feature>
<feature type="sequence variant" id="VAR_050927" description="In dbSNP:rs9306099.">
    <original>G</original>
    <variation>S</variation>
    <location>
        <position position="153"/>
    </location>
</feature>
<feature type="sequence variant" id="VAR_075927" description="In SMDAX; abolishes interaction with NEK1; dbSNP:rs1114167892." evidence="4">
    <original>L</original>
    <variation>P</variation>
    <location>
        <position position="224"/>
    </location>
</feature>
<feature type="sequence conflict" description="In Ref. 3; AAB46590/AAB46591." evidence="14" ref="3">
    <original>R</original>
    <variation>A</variation>
    <location>
        <position position="106"/>
    </location>
</feature>
<feature type="helix" evidence="18">
    <location>
        <begin position="216"/>
        <end position="224"/>
    </location>
</feature>
<feature type="helix" evidence="18">
    <location>
        <begin position="229"/>
        <end position="244"/>
    </location>
</feature>
<feature type="modified residue" description="Phosphoserine" evidence="16">
    <location sequence="O43822-3">
        <position position="177"/>
    </location>
</feature>
<feature type="modified residue" description="Phosphoserine" evidence="16">
    <location sequence="O43822-4">
        <position position="177"/>
    </location>
</feature>
<gene>
    <name evidence="15" type="primary">CFAP410</name>
    <name evidence="15" type="synonym">C21orf2</name>
    <name type="synonym">LRRC76</name>
</gene>
<evidence type="ECO:0000250" key="1">
    <source>
        <dbReference type="UniProtKB" id="Q8C6G1"/>
    </source>
</evidence>
<evidence type="ECO:0000256" key="2">
    <source>
        <dbReference type="SAM" id="MobiDB-lite"/>
    </source>
</evidence>
<evidence type="ECO:0000269" key="3">
    <source>
    </source>
</evidence>
<evidence type="ECO:0000269" key="4">
    <source>
    </source>
</evidence>
<evidence type="ECO:0000269" key="5">
    <source>
    </source>
</evidence>
<evidence type="ECO:0000269" key="6">
    <source>
    </source>
</evidence>
<evidence type="ECO:0000269" key="7">
    <source>
    </source>
</evidence>
<evidence type="ECO:0000269" key="8">
    <source>
    </source>
</evidence>
<evidence type="ECO:0000269" key="9">
    <source>
    </source>
</evidence>
<evidence type="ECO:0000269" key="10">
    <source>
    </source>
</evidence>
<evidence type="ECO:0000269" key="11">
    <source ref="2"/>
</evidence>
<evidence type="ECO:0000303" key="12">
    <source>
    </source>
</evidence>
<evidence type="ECO:0000303" key="13">
    <source ref="3"/>
</evidence>
<evidence type="ECO:0000305" key="14"/>
<evidence type="ECO:0000312" key="15">
    <source>
        <dbReference type="HGNC" id="HGNC:1260"/>
    </source>
</evidence>
<evidence type="ECO:0007744" key="16">
    <source>
    </source>
</evidence>
<evidence type="ECO:0007744" key="17">
    <source>
    </source>
</evidence>
<evidence type="ECO:0007829" key="18">
    <source>
        <dbReference type="PDB" id="8AXR"/>
    </source>
</evidence>
<sequence>MKLTRKMVLTRAKASELHSVRKLNCWGSRLTDISICQEMPSLEVITLSVNSISTLEPVSRCQRLSELYLRRNRIPSLAELFYLKGLPRLRVLWLAENPCCGTSPHRYRMTVLRTLPRLQKLDNQAVTEEELSRALSEGEEITAAPEREGTGHGGPKLCCTLSSLSSAAETGRDPLDSEEEATSGAQDERGLKPPSRGQFPSLSARDASSSHRGRNVLTAILLLLRELDAEGLEAVQQTVGSRLQALRGEEVQEHAE</sequence>
<proteinExistence type="evidence at protein level"/>